<name>Y1558_ANADF</name>
<proteinExistence type="inferred from homology"/>
<reference key="1">
    <citation type="journal article" date="2015" name="Genome Announc.">
        <title>Complete genome sequence of Anaeromyxobacter sp. Fw109-5, an anaerobic, metal-reducing bacterium isolated from a contaminated subsurface environment.</title>
        <authorList>
            <person name="Hwang C."/>
            <person name="Copeland A."/>
            <person name="Lucas S."/>
            <person name="Lapidus A."/>
            <person name="Barry K."/>
            <person name="Glavina Del Rio T."/>
            <person name="Dalin E."/>
            <person name="Tice H."/>
            <person name="Pitluck S."/>
            <person name="Sims D."/>
            <person name="Brettin T."/>
            <person name="Bruce D.C."/>
            <person name="Detter J.C."/>
            <person name="Han C.S."/>
            <person name="Schmutz J."/>
            <person name="Larimer F.W."/>
            <person name="Land M.L."/>
            <person name="Hauser L.J."/>
            <person name="Kyrpides N."/>
            <person name="Lykidis A."/>
            <person name="Richardson P."/>
            <person name="Belieav A."/>
            <person name="Sanford R.A."/>
            <person name="Loeffler F.E."/>
            <person name="Fields M.W."/>
        </authorList>
    </citation>
    <scope>NUCLEOTIDE SEQUENCE [LARGE SCALE GENOMIC DNA]</scope>
    <source>
        <strain>Fw109-5</strain>
    </source>
</reference>
<sequence length="283" mass="31592">MAFTRRLLGHGVGLRAKHFAEHLAVEPPVDWVEAISENFMAPGGRPLAVLEKVRRDVPVVLHGVSLSIGSTDPLSERYLALLTDLTSRIEPAWISDHLCWGSHGGRYAHDLWPLPYTEEALRHVVRRILRVQEVLGRQLLLENVSSYVAFRASEMPEWEFLAEVARRADCGILLDVNNVYVSARNHGFDPYAYLAALPASRIGQIHLAGHSDKGRYLLDTHGEEVPAAVWELYAETVRRFGRISTLIEWDDHVPPLGRLVQESRRAAEVEAAALAALQQGALP</sequence>
<organism>
    <name type="scientific">Anaeromyxobacter sp. (strain Fw109-5)</name>
    <dbReference type="NCBI Taxonomy" id="404589"/>
    <lineage>
        <taxon>Bacteria</taxon>
        <taxon>Pseudomonadati</taxon>
        <taxon>Myxococcota</taxon>
        <taxon>Myxococcia</taxon>
        <taxon>Myxococcales</taxon>
        <taxon>Cystobacterineae</taxon>
        <taxon>Anaeromyxobacteraceae</taxon>
        <taxon>Anaeromyxobacter</taxon>
    </lineage>
</organism>
<gene>
    <name type="ordered locus">Anae109_1558</name>
</gene>
<accession>A7HAL6</accession>
<comment type="similarity">
    <text evidence="1">Belongs to the UPF0276 family.</text>
</comment>
<dbReference type="EMBL" id="CP000769">
    <property type="protein sequence ID" value="ABS25762.1"/>
    <property type="molecule type" value="Genomic_DNA"/>
</dbReference>
<dbReference type="RefSeq" id="WP_011985868.1">
    <property type="nucleotide sequence ID" value="NC_009675.1"/>
</dbReference>
<dbReference type="SMR" id="A7HAL6"/>
<dbReference type="STRING" id="404589.Anae109_1558"/>
<dbReference type="KEGG" id="afw:Anae109_1558"/>
<dbReference type="eggNOG" id="COG3220">
    <property type="taxonomic scope" value="Bacteria"/>
</dbReference>
<dbReference type="HOGENOM" id="CLU_064263_0_0_7"/>
<dbReference type="OrthoDB" id="9763101at2"/>
<dbReference type="Proteomes" id="UP000006382">
    <property type="component" value="Chromosome"/>
</dbReference>
<dbReference type="Gene3D" id="3.20.20.150">
    <property type="entry name" value="Divalent-metal-dependent TIM barrel enzymes"/>
    <property type="match status" value="1"/>
</dbReference>
<dbReference type="HAMAP" id="MF_00697">
    <property type="entry name" value="UPF0276"/>
    <property type="match status" value="1"/>
</dbReference>
<dbReference type="InterPro" id="IPR007801">
    <property type="entry name" value="MbnB/TglH/ChrH"/>
</dbReference>
<dbReference type="InterPro" id="IPR036237">
    <property type="entry name" value="Xyl_isomerase-like_sf"/>
</dbReference>
<dbReference type="NCBIfam" id="NF003818">
    <property type="entry name" value="PRK05409.1"/>
    <property type="match status" value="1"/>
</dbReference>
<dbReference type="PANTHER" id="PTHR42194">
    <property type="entry name" value="UPF0276 PROTEIN HI_1600"/>
    <property type="match status" value="1"/>
</dbReference>
<dbReference type="PANTHER" id="PTHR42194:SF1">
    <property type="entry name" value="UPF0276 PROTEIN HI_1600"/>
    <property type="match status" value="1"/>
</dbReference>
<dbReference type="Pfam" id="PF05114">
    <property type="entry name" value="MbnB_TglH_ChrH"/>
    <property type="match status" value="1"/>
</dbReference>
<dbReference type="SUPFAM" id="SSF51658">
    <property type="entry name" value="Xylose isomerase-like"/>
    <property type="match status" value="1"/>
</dbReference>
<feature type="chain" id="PRO_1000045469" description="UPF0276 protein Anae109_1558">
    <location>
        <begin position="1"/>
        <end position="283"/>
    </location>
</feature>
<protein>
    <recommendedName>
        <fullName evidence="1">UPF0276 protein Anae109_1558</fullName>
    </recommendedName>
</protein>
<keyword id="KW-1185">Reference proteome</keyword>
<evidence type="ECO:0000255" key="1">
    <source>
        <dbReference type="HAMAP-Rule" id="MF_00697"/>
    </source>
</evidence>